<proteinExistence type="predicted"/>
<sequence length="1006" mass="118062">MVYEAKIDPSLADLFRNSDKEPFPAMTHELPPEKSLKARLLEQEDERISNVLAHEKRFSTEPVVIDDVFMSRLCVDSQPGCSRIPDIDIANVFRDDLESCTLSSSEDEEEEEEPIGQISTFEMLHAPRKPIVWSEQELSDFDMKSRLLDMRMDHWDLARIANVPKRIAKGETVNLRMPRYSAEVVKQRIAKGVTDIFGHFSLVPHTLTKSHKPVAERKQILIERYHDLMNDFDYATRPGSVESKKYANLTKRLNLCNDFLSAPKLPHRLFPRLIIRSIRPPETPKEPVKRKMRESESDDSVIIIPRKIEKEKPRPTTENVVLKKVEMEKKRPRSPELVPKKIVMEKERPSSPDSEAEEREHNLRIEKERHQKELEFRREALRKREQEREEHKKRAQEELRRQMTAALEESTRRQAEMNRQIEDEARKRDELQRIAEEKKRKQLLEDQCRAKQEKEKRDAEELEQMRLNIARLAGTKDVENALKSPSLVEIVPPSDARAFEMIKWNAVKCKIPENWEKRKDKFYRVFEWPSDAAQRDIERDEVVSIPRSKPIVIPQEDTYITRNRIPLKLPPKVKQAVPALVVRNSNNATRTVVAATVNENGIQWPAETINIDEVVREIRGLMAPTRRNFAISLSPKTDEIDYQAINLNRLKSGIVYPFYFSDGLYWPLVFLKSSKNGKPEAQRHVEALTSCKSFSGKYASRYLLTTTKEEDSATKKFEDAYADSDGDWADYSTKPGRFSNRAGFKPHYDTSNDSFEVQKQRAVDSLNSQYEKERNELDAFGRYTDEYRKRKDRAQYQNHIKTHLRELVRDARLDAFSFKEEFKDFEGGFEDYPGTRVEPYENDWYSHGYTLYSHTRDAAYADYMHDVCKPYEDMLPPTEYHEIFNEWCFTPMLASLHYQLKKNAFDVLSPQDVKDMEARHRKYIGLVQKERKFSLEQALDVCKLTDYDKRQWTILHDQLVTHFKDFPSISGLVYDRNTNLLANVNRNLKHLFSTIYRDDSPPDDQF</sequence>
<evidence type="ECO:0000255" key="1"/>
<evidence type="ECO:0000256" key="2">
    <source>
        <dbReference type="SAM" id="MobiDB-lite"/>
    </source>
</evidence>
<keyword id="KW-0175">Coiled coil</keyword>
<keyword id="KW-1185">Reference proteome</keyword>
<protein>
    <recommendedName>
        <fullName>Uncharacterized protein D1044.6</fullName>
    </recommendedName>
</protein>
<feature type="chain" id="PRO_0000065263" description="Uncharacterized protein D1044.6">
    <location>
        <begin position="1"/>
        <end position="1006"/>
    </location>
</feature>
<feature type="region of interest" description="Disordered" evidence="2">
    <location>
        <begin position="326"/>
        <end position="371"/>
    </location>
</feature>
<feature type="coiled-coil region" evidence="1">
    <location>
        <begin position="358"/>
        <end position="473"/>
    </location>
</feature>
<feature type="coiled-coil region" evidence="1">
    <location>
        <begin position="756"/>
        <end position="782"/>
    </location>
</feature>
<feature type="compositionally biased region" description="Basic and acidic residues" evidence="2">
    <location>
        <begin position="338"/>
        <end position="350"/>
    </location>
</feature>
<feature type="compositionally biased region" description="Basic and acidic residues" evidence="2">
    <location>
        <begin position="358"/>
        <end position="371"/>
    </location>
</feature>
<reference key="1">
    <citation type="journal article" date="1998" name="Science">
        <title>Genome sequence of the nematode C. elegans: a platform for investigating biology.</title>
        <authorList>
            <consortium name="The C. elegans sequencing consortium"/>
        </authorList>
    </citation>
    <scope>NUCLEOTIDE SEQUENCE [LARGE SCALE GENOMIC DNA]</scope>
    <source>
        <strain>Bristol N2</strain>
    </source>
</reference>
<accession>P41954</accession>
<organism>
    <name type="scientific">Caenorhabditis elegans</name>
    <dbReference type="NCBI Taxonomy" id="6239"/>
    <lineage>
        <taxon>Eukaryota</taxon>
        <taxon>Metazoa</taxon>
        <taxon>Ecdysozoa</taxon>
        <taxon>Nematoda</taxon>
        <taxon>Chromadorea</taxon>
        <taxon>Rhabditida</taxon>
        <taxon>Rhabditina</taxon>
        <taxon>Rhabditomorpha</taxon>
        <taxon>Rhabditoidea</taxon>
        <taxon>Rhabditidae</taxon>
        <taxon>Peloderinae</taxon>
        <taxon>Caenorhabditis</taxon>
    </lineage>
</organism>
<dbReference type="EMBL" id="FO081000">
    <property type="protein sequence ID" value="CCD68376.1"/>
    <property type="molecule type" value="Genomic_DNA"/>
</dbReference>
<dbReference type="PIR" id="T15885">
    <property type="entry name" value="T15885"/>
</dbReference>
<dbReference type="RefSeq" id="NP_498184.3">
    <property type="nucleotide sequence ID" value="NM_065783.5"/>
</dbReference>
<dbReference type="SMR" id="P41954"/>
<dbReference type="BioGRID" id="40991">
    <property type="interactions" value="1"/>
</dbReference>
<dbReference type="FunCoup" id="P41954">
    <property type="interactions" value="1227"/>
</dbReference>
<dbReference type="STRING" id="6239.D1044.6.2"/>
<dbReference type="PaxDb" id="6239-D1044.6"/>
<dbReference type="PeptideAtlas" id="P41954"/>
<dbReference type="EnsemblMetazoa" id="D1044.6.1">
    <property type="protein sequence ID" value="D1044.6.1"/>
    <property type="gene ID" value="WBGene00017031"/>
</dbReference>
<dbReference type="GeneID" id="175762"/>
<dbReference type="KEGG" id="cel:CELE_D1044.6"/>
<dbReference type="UCSC" id="D1044.6">
    <property type="organism name" value="c. elegans"/>
</dbReference>
<dbReference type="AGR" id="WB:WBGene00017031"/>
<dbReference type="CTD" id="175762"/>
<dbReference type="WormBase" id="D1044.6">
    <property type="protein sequence ID" value="CE41625"/>
    <property type="gene ID" value="WBGene00017031"/>
</dbReference>
<dbReference type="eggNOG" id="ENOG502SCJR">
    <property type="taxonomic scope" value="Eukaryota"/>
</dbReference>
<dbReference type="GeneTree" id="ENSGT00390000000614"/>
<dbReference type="HOGENOM" id="CLU_304240_0_0_1"/>
<dbReference type="InParanoid" id="P41954"/>
<dbReference type="OMA" id="FNEWCFT"/>
<dbReference type="OrthoDB" id="5821779at2759"/>
<dbReference type="PRO" id="PR:P41954"/>
<dbReference type="Proteomes" id="UP000001940">
    <property type="component" value="Chromosome III"/>
</dbReference>
<dbReference type="Bgee" id="WBGene00017031">
    <property type="expression patterns" value="Expressed in adult organism and 4 other cell types or tissues"/>
</dbReference>
<dbReference type="GO" id="GO:0005654">
    <property type="term" value="C:nucleoplasm"/>
    <property type="evidence" value="ECO:0000318"/>
    <property type="project" value="GO_Central"/>
</dbReference>
<dbReference type="GO" id="GO:0045892">
    <property type="term" value="P:negative regulation of DNA-templated transcription"/>
    <property type="evidence" value="ECO:0000318"/>
    <property type="project" value="GO_Central"/>
</dbReference>
<dbReference type="GO" id="GO:0045893">
    <property type="term" value="P:positive regulation of DNA-templated transcription"/>
    <property type="evidence" value="ECO:0000318"/>
    <property type="project" value="GO_Central"/>
</dbReference>
<dbReference type="InterPro" id="IPR055309">
    <property type="entry name" value="Znf318-like"/>
</dbReference>
<dbReference type="PANTHER" id="PTHR15577">
    <property type="entry name" value="ZINC FINGER CONTAINING PROTEIN"/>
    <property type="match status" value="1"/>
</dbReference>
<dbReference type="PANTHER" id="PTHR15577:SF2">
    <property type="entry name" value="ZINC FINGER PROTEIN 318"/>
    <property type="match status" value="1"/>
</dbReference>
<name>YLK6_CAEEL</name>
<gene>
    <name type="ORF">D1044.6</name>
</gene>